<keyword id="KW-1185">Reference proteome</keyword>
<keyword id="KW-0687">Ribonucleoprotein</keyword>
<keyword id="KW-0689">Ribosomal protein</keyword>
<keyword id="KW-0694">RNA-binding</keyword>
<keyword id="KW-0699">rRNA-binding</keyword>
<feature type="chain" id="PRO_0000236433" description="Small ribosomal subunit protein bS20">
    <location>
        <begin position="1"/>
        <end position="95"/>
    </location>
</feature>
<dbReference type="EMBL" id="CP000236">
    <property type="protein sequence ID" value="ABD45109.1"/>
    <property type="molecule type" value="Genomic_DNA"/>
</dbReference>
<dbReference type="RefSeq" id="WP_006010781.1">
    <property type="nucleotide sequence ID" value="NC_007799.1"/>
</dbReference>
<dbReference type="SMR" id="Q2GI32"/>
<dbReference type="STRING" id="205920.ECH_0071"/>
<dbReference type="KEGG" id="ech:ECH_0071"/>
<dbReference type="eggNOG" id="COG0268">
    <property type="taxonomic scope" value="Bacteria"/>
</dbReference>
<dbReference type="HOGENOM" id="CLU_160655_3_0_5"/>
<dbReference type="OrthoDB" id="9807974at2"/>
<dbReference type="Proteomes" id="UP000008320">
    <property type="component" value="Chromosome"/>
</dbReference>
<dbReference type="GO" id="GO:0015935">
    <property type="term" value="C:small ribosomal subunit"/>
    <property type="evidence" value="ECO:0007669"/>
    <property type="project" value="TreeGrafter"/>
</dbReference>
<dbReference type="GO" id="GO:0070181">
    <property type="term" value="F:small ribosomal subunit rRNA binding"/>
    <property type="evidence" value="ECO:0007669"/>
    <property type="project" value="TreeGrafter"/>
</dbReference>
<dbReference type="GO" id="GO:0003735">
    <property type="term" value="F:structural constituent of ribosome"/>
    <property type="evidence" value="ECO:0007669"/>
    <property type="project" value="InterPro"/>
</dbReference>
<dbReference type="GO" id="GO:0006412">
    <property type="term" value="P:translation"/>
    <property type="evidence" value="ECO:0007669"/>
    <property type="project" value="UniProtKB-UniRule"/>
</dbReference>
<dbReference type="Gene3D" id="1.20.58.110">
    <property type="entry name" value="Ribosomal protein S20"/>
    <property type="match status" value="1"/>
</dbReference>
<dbReference type="HAMAP" id="MF_00500">
    <property type="entry name" value="Ribosomal_bS20"/>
    <property type="match status" value="1"/>
</dbReference>
<dbReference type="InterPro" id="IPR002583">
    <property type="entry name" value="Ribosomal_bS20"/>
</dbReference>
<dbReference type="InterPro" id="IPR036510">
    <property type="entry name" value="Ribosomal_bS20_sf"/>
</dbReference>
<dbReference type="NCBIfam" id="TIGR00029">
    <property type="entry name" value="S20"/>
    <property type="match status" value="1"/>
</dbReference>
<dbReference type="PANTHER" id="PTHR33398">
    <property type="entry name" value="30S RIBOSOMAL PROTEIN S20"/>
    <property type="match status" value="1"/>
</dbReference>
<dbReference type="PANTHER" id="PTHR33398:SF1">
    <property type="entry name" value="SMALL RIBOSOMAL SUBUNIT PROTEIN BS20C"/>
    <property type="match status" value="1"/>
</dbReference>
<dbReference type="Pfam" id="PF01649">
    <property type="entry name" value="Ribosomal_S20p"/>
    <property type="match status" value="1"/>
</dbReference>
<dbReference type="SUPFAM" id="SSF46992">
    <property type="entry name" value="Ribosomal protein S20"/>
    <property type="match status" value="1"/>
</dbReference>
<reference key="1">
    <citation type="journal article" date="2006" name="PLoS Genet.">
        <title>Comparative genomics of emerging human ehrlichiosis agents.</title>
        <authorList>
            <person name="Dunning Hotopp J.C."/>
            <person name="Lin M."/>
            <person name="Madupu R."/>
            <person name="Crabtree J."/>
            <person name="Angiuoli S.V."/>
            <person name="Eisen J.A."/>
            <person name="Seshadri R."/>
            <person name="Ren Q."/>
            <person name="Wu M."/>
            <person name="Utterback T.R."/>
            <person name="Smith S."/>
            <person name="Lewis M."/>
            <person name="Khouri H."/>
            <person name="Zhang C."/>
            <person name="Niu H."/>
            <person name="Lin Q."/>
            <person name="Ohashi N."/>
            <person name="Zhi N."/>
            <person name="Nelson W.C."/>
            <person name="Brinkac L.M."/>
            <person name="Dodson R.J."/>
            <person name="Rosovitz M.J."/>
            <person name="Sundaram J.P."/>
            <person name="Daugherty S.C."/>
            <person name="Davidsen T."/>
            <person name="Durkin A.S."/>
            <person name="Gwinn M.L."/>
            <person name="Haft D.H."/>
            <person name="Selengut J.D."/>
            <person name="Sullivan S.A."/>
            <person name="Zafar N."/>
            <person name="Zhou L."/>
            <person name="Benahmed F."/>
            <person name="Forberger H."/>
            <person name="Halpin R."/>
            <person name="Mulligan S."/>
            <person name="Robinson J."/>
            <person name="White O."/>
            <person name="Rikihisa Y."/>
            <person name="Tettelin H."/>
        </authorList>
    </citation>
    <scope>NUCLEOTIDE SEQUENCE [LARGE SCALE GENOMIC DNA]</scope>
    <source>
        <strain>ATCC CRL-10679 / Arkansas</strain>
    </source>
</reference>
<proteinExistence type="inferred from homology"/>
<name>RS20_EHRCR</name>
<evidence type="ECO:0000255" key="1">
    <source>
        <dbReference type="HAMAP-Rule" id="MF_00500"/>
    </source>
</evidence>
<evidence type="ECO:0000305" key="2"/>
<sequence>MANHPSAKKMIKVIKKRTMVNRMRKSRAHNYVKKFMAALAAGNKELMIETFKKAESNLHKCVNKKIIHRNTAARKISRMALKLKAFDLQQQAKAV</sequence>
<accession>Q2GI32</accession>
<organism>
    <name type="scientific">Ehrlichia chaffeensis (strain ATCC CRL-10679 / Arkansas)</name>
    <dbReference type="NCBI Taxonomy" id="205920"/>
    <lineage>
        <taxon>Bacteria</taxon>
        <taxon>Pseudomonadati</taxon>
        <taxon>Pseudomonadota</taxon>
        <taxon>Alphaproteobacteria</taxon>
        <taxon>Rickettsiales</taxon>
        <taxon>Anaplasmataceae</taxon>
        <taxon>Ehrlichia</taxon>
    </lineage>
</organism>
<gene>
    <name evidence="1" type="primary">rpsT</name>
    <name type="ordered locus">ECH_0071</name>
</gene>
<protein>
    <recommendedName>
        <fullName evidence="1">Small ribosomal subunit protein bS20</fullName>
    </recommendedName>
    <alternativeName>
        <fullName evidence="2">30S ribosomal protein S20</fullName>
    </alternativeName>
</protein>
<comment type="function">
    <text evidence="1">Binds directly to 16S ribosomal RNA.</text>
</comment>
<comment type="similarity">
    <text evidence="1">Belongs to the bacterial ribosomal protein bS20 family.</text>
</comment>